<feature type="chain" id="PRO_1000093361" description="Endonuclease MutS2">
    <location>
        <begin position="1"/>
        <end position="787"/>
    </location>
</feature>
<feature type="domain" description="Smr" evidence="1">
    <location>
        <begin position="712"/>
        <end position="787"/>
    </location>
</feature>
<feature type="region of interest" description="Disordered" evidence="2">
    <location>
        <begin position="685"/>
        <end position="709"/>
    </location>
</feature>
<feature type="binding site" evidence="1">
    <location>
        <begin position="334"/>
        <end position="341"/>
    </location>
    <ligand>
        <name>ATP</name>
        <dbReference type="ChEBI" id="CHEBI:30616"/>
    </ligand>
</feature>
<name>MUTS2_LEVBA</name>
<keyword id="KW-0067">ATP-binding</keyword>
<keyword id="KW-0238">DNA-binding</keyword>
<keyword id="KW-0255">Endonuclease</keyword>
<keyword id="KW-0378">Hydrolase</keyword>
<keyword id="KW-0540">Nuclease</keyword>
<keyword id="KW-0547">Nucleotide-binding</keyword>
<keyword id="KW-1185">Reference proteome</keyword>
<keyword id="KW-0694">RNA-binding</keyword>
<keyword id="KW-0699">rRNA-binding</keyword>
<protein>
    <recommendedName>
        <fullName evidence="1">Endonuclease MutS2</fullName>
        <ecNumber evidence="1">3.1.-.-</ecNumber>
    </recommendedName>
    <alternativeName>
        <fullName evidence="1">Ribosome-associated protein quality control-upstream factor</fullName>
        <shortName evidence="1">RQC-upstream factor</shortName>
        <shortName evidence="1">RqcU</shortName>
        <ecNumber evidence="1">3.6.4.-</ecNumber>
    </alternativeName>
</protein>
<sequence>MNQKTLKIMEYERIKQALRGYLVSAAGQHELAELAPTADAKQLQIWLDESRDGADIYRLENGIPLPKLDDIRPHLHRLAMEAALNGLELAQISRVLWTTSSVVKFFRDLTEKEITLRRLDRVVKELVTLPDVTRRLRTSLEGDGHITDEASPALRQIRQHIAQTEVAIRQTMDQYTRGKDAKYLSETIVTIRDERYVIPVRAEYKQRFGGIVHDQSASGQTLFIEPQAVVGLNNRLRQNQIDERHEEQRILAELTALLDPYQAEILRNSEILGHFDFINAKAKYAHQLKATEPKLSEDNQVNLRQARHPLIDPKKVVANDITIGRDYKTIIVTGPNTGGKTITLKTLALVQLMGQSGLFIPANENSVIGIFDDIFADIGDEQSIEQSLSTFSGHMENIVAILRQADERSLIVVDELGAGTDPQEGAALAIAILDQMGTLGSYVMASTHYPELKAYGYNRPETINASMEFDGETLQPTYHLLIGIPGRSNALDIAARLGMPEQVVAAARGLTDQDSQDLNAMISDLTEQKRHADADAERLRQELAEADELHAQLKKQFDAYQHQKDQLMTDAKREANRLVDESRKRANQIISDLRKKQLAAGKSVVKEDELIAAQGALNALQQDSKLKKNRVLRREKAKLDFHKGDSVLVKSYGQVGVLMEQLDDQHWEVQLGILKMKIATNDLEKAQDPAKSAKQPRASVKRSGSSGMSATLDLRGHRYEEAMAEVDRYIDSALLAGYPSVTIIHGKGTGALRKGVTDYLKRNNRIKSFGFSPANAGGDGSTVVHFK</sequence>
<evidence type="ECO:0000255" key="1">
    <source>
        <dbReference type="HAMAP-Rule" id="MF_00092"/>
    </source>
</evidence>
<evidence type="ECO:0000256" key="2">
    <source>
        <dbReference type="SAM" id="MobiDB-lite"/>
    </source>
</evidence>
<organism>
    <name type="scientific">Levilactobacillus brevis (strain ATCC 367 / BCRC 12310 / CIP 105137 / JCM 1170 / LMG 11437 / NCIMB 947 / NCTC 947)</name>
    <name type="common">Lactobacillus brevis</name>
    <dbReference type="NCBI Taxonomy" id="387344"/>
    <lineage>
        <taxon>Bacteria</taxon>
        <taxon>Bacillati</taxon>
        <taxon>Bacillota</taxon>
        <taxon>Bacilli</taxon>
        <taxon>Lactobacillales</taxon>
        <taxon>Lactobacillaceae</taxon>
        <taxon>Levilactobacillus</taxon>
    </lineage>
</organism>
<reference key="1">
    <citation type="journal article" date="2006" name="Proc. Natl. Acad. Sci. U.S.A.">
        <title>Comparative genomics of the lactic acid bacteria.</title>
        <authorList>
            <person name="Makarova K.S."/>
            <person name="Slesarev A."/>
            <person name="Wolf Y.I."/>
            <person name="Sorokin A."/>
            <person name="Mirkin B."/>
            <person name="Koonin E.V."/>
            <person name="Pavlov A."/>
            <person name="Pavlova N."/>
            <person name="Karamychev V."/>
            <person name="Polouchine N."/>
            <person name="Shakhova V."/>
            <person name="Grigoriev I."/>
            <person name="Lou Y."/>
            <person name="Rohksar D."/>
            <person name="Lucas S."/>
            <person name="Huang K."/>
            <person name="Goodstein D.M."/>
            <person name="Hawkins T."/>
            <person name="Plengvidhya V."/>
            <person name="Welker D."/>
            <person name="Hughes J."/>
            <person name="Goh Y."/>
            <person name="Benson A."/>
            <person name="Baldwin K."/>
            <person name="Lee J.-H."/>
            <person name="Diaz-Muniz I."/>
            <person name="Dosti B."/>
            <person name="Smeianov V."/>
            <person name="Wechter W."/>
            <person name="Barabote R."/>
            <person name="Lorca G."/>
            <person name="Altermann E."/>
            <person name="Barrangou R."/>
            <person name="Ganesan B."/>
            <person name="Xie Y."/>
            <person name="Rawsthorne H."/>
            <person name="Tamir D."/>
            <person name="Parker C."/>
            <person name="Breidt F."/>
            <person name="Broadbent J.R."/>
            <person name="Hutkins R."/>
            <person name="O'Sullivan D."/>
            <person name="Steele J."/>
            <person name="Unlu G."/>
            <person name="Saier M.H. Jr."/>
            <person name="Klaenhammer T."/>
            <person name="Richardson P."/>
            <person name="Kozyavkin S."/>
            <person name="Weimer B.C."/>
            <person name="Mills D.A."/>
        </authorList>
    </citation>
    <scope>NUCLEOTIDE SEQUENCE [LARGE SCALE GENOMIC DNA]</scope>
    <source>
        <strain>ATCC 367 / BCRC 12310 / CIP 105137 / JCM 1170 / LMG 11437 / NCIMB 947 / NCTC 947</strain>
    </source>
</reference>
<dbReference type="EC" id="3.1.-.-" evidence="1"/>
<dbReference type="EC" id="3.6.4.-" evidence="1"/>
<dbReference type="EMBL" id="CP000416">
    <property type="protein sequence ID" value="ABJ64323.1"/>
    <property type="molecule type" value="Genomic_DNA"/>
</dbReference>
<dbReference type="RefSeq" id="WP_011667953.1">
    <property type="nucleotide sequence ID" value="NC_008497.1"/>
</dbReference>
<dbReference type="SMR" id="Q03R49"/>
<dbReference type="STRING" id="387344.LVIS_1217"/>
<dbReference type="KEGG" id="lbr:LVIS_1217"/>
<dbReference type="PATRIC" id="fig|387344.15.peg.1156"/>
<dbReference type="eggNOG" id="COG1193">
    <property type="taxonomic scope" value="Bacteria"/>
</dbReference>
<dbReference type="HOGENOM" id="CLU_011252_2_1_9"/>
<dbReference type="Proteomes" id="UP000001652">
    <property type="component" value="Chromosome"/>
</dbReference>
<dbReference type="GO" id="GO:0005524">
    <property type="term" value="F:ATP binding"/>
    <property type="evidence" value="ECO:0007669"/>
    <property type="project" value="UniProtKB-UniRule"/>
</dbReference>
<dbReference type="GO" id="GO:0016887">
    <property type="term" value="F:ATP hydrolysis activity"/>
    <property type="evidence" value="ECO:0007669"/>
    <property type="project" value="InterPro"/>
</dbReference>
<dbReference type="GO" id="GO:0140664">
    <property type="term" value="F:ATP-dependent DNA damage sensor activity"/>
    <property type="evidence" value="ECO:0007669"/>
    <property type="project" value="InterPro"/>
</dbReference>
<dbReference type="GO" id="GO:0004519">
    <property type="term" value="F:endonuclease activity"/>
    <property type="evidence" value="ECO:0007669"/>
    <property type="project" value="UniProtKB-UniRule"/>
</dbReference>
<dbReference type="GO" id="GO:0030983">
    <property type="term" value="F:mismatched DNA binding"/>
    <property type="evidence" value="ECO:0007669"/>
    <property type="project" value="InterPro"/>
</dbReference>
<dbReference type="GO" id="GO:0043023">
    <property type="term" value="F:ribosomal large subunit binding"/>
    <property type="evidence" value="ECO:0007669"/>
    <property type="project" value="UniProtKB-UniRule"/>
</dbReference>
<dbReference type="GO" id="GO:0019843">
    <property type="term" value="F:rRNA binding"/>
    <property type="evidence" value="ECO:0007669"/>
    <property type="project" value="UniProtKB-UniRule"/>
</dbReference>
<dbReference type="GO" id="GO:0006298">
    <property type="term" value="P:mismatch repair"/>
    <property type="evidence" value="ECO:0007669"/>
    <property type="project" value="InterPro"/>
</dbReference>
<dbReference type="GO" id="GO:0045910">
    <property type="term" value="P:negative regulation of DNA recombination"/>
    <property type="evidence" value="ECO:0007669"/>
    <property type="project" value="InterPro"/>
</dbReference>
<dbReference type="GO" id="GO:0072344">
    <property type="term" value="P:rescue of stalled ribosome"/>
    <property type="evidence" value="ECO:0007669"/>
    <property type="project" value="UniProtKB-UniRule"/>
</dbReference>
<dbReference type="CDD" id="cd03280">
    <property type="entry name" value="ABC_MutS2"/>
    <property type="match status" value="1"/>
</dbReference>
<dbReference type="FunFam" id="3.40.50.300:FF:000830">
    <property type="entry name" value="Endonuclease MutS2"/>
    <property type="match status" value="1"/>
</dbReference>
<dbReference type="Gene3D" id="3.30.1370.110">
    <property type="match status" value="1"/>
</dbReference>
<dbReference type="Gene3D" id="3.40.50.300">
    <property type="entry name" value="P-loop containing nucleotide triphosphate hydrolases"/>
    <property type="match status" value="1"/>
</dbReference>
<dbReference type="HAMAP" id="MF_00092">
    <property type="entry name" value="MutS2"/>
    <property type="match status" value="1"/>
</dbReference>
<dbReference type="InterPro" id="IPR000432">
    <property type="entry name" value="DNA_mismatch_repair_MutS_C"/>
</dbReference>
<dbReference type="InterPro" id="IPR007696">
    <property type="entry name" value="DNA_mismatch_repair_MutS_core"/>
</dbReference>
<dbReference type="InterPro" id="IPR036187">
    <property type="entry name" value="DNA_mismatch_repair_MutS_sf"/>
</dbReference>
<dbReference type="InterPro" id="IPR046893">
    <property type="entry name" value="MSSS"/>
</dbReference>
<dbReference type="InterPro" id="IPR045076">
    <property type="entry name" value="MutS"/>
</dbReference>
<dbReference type="InterPro" id="IPR005747">
    <property type="entry name" value="MutS2"/>
</dbReference>
<dbReference type="InterPro" id="IPR027417">
    <property type="entry name" value="P-loop_NTPase"/>
</dbReference>
<dbReference type="InterPro" id="IPR002625">
    <property type="entry name" value="Smr_dom"/>
</dbReference>
<dbReference type="InterPro" id="IPR036063">
    <property type="entry name" value="Smr_dom_sf"/>
</dbReference>
<dbReference type="NCBIfam" id="TIGR01069">
    <property type="entry name" value="mutS2"/>
    <property type="match status" value="1"/>
</dbReference>
<dbReference type="PANTHER" id="PTHR48466:SF2">
    <property type="entry name" value="OS10G0509000 PROTEIN"/>
    <property type="match status" value="1"/>
</dbReference>
<dbReference type="PANTHER" id="PTHR48466">
    <property type="entry name" value="OS10G0509000 PROTEIN-RELATED"/>
    <property type="match status" value="1"/>
</dbReference>
<dbReference type="Pfam" id="PF20297">
    <property type="entry name" value="MSSS"/>
    <property type="match status" value="1"/>
</dbReference>
<dbReference type="Pfam" id="PF00488">
    <property type="entry name" value="MutS_V"/>
    <property type="match status" value="1"/>
</dbReference>
<dbReference type="Pfam" id="PF01713">
    <property type="entry name" value="Smr"/>
    <property type="match status" value="1"/>
</dbReference>
<dbReference type="PIRSF" id="PIRSF005814">
    <property type="entry name" value="MutS_YshD"/>
    <property type="match status" value="1"/>
</dbReference>
<dbReference type="SMART" id="SM00534">
    <property type="entry name" value="MUTSac"/>
    <property type="match status" value="1"/>
</dbReference>
<dbReference type="SMART" id="SM00533">
    <property type="entry name" value="MUTSd"/>
    <property type="match status" value="1"/>
</dbReference>
<dbReference type="SMART" id="SM00463">
    <property type="entry name" value="SMR"/>
    <property type="match status" value="1"/>
</dbReference>
<dbReference type="SUPFAM" id="SSF48334">
    <property type="entry name" value="DNA repair protein MutS, domain III"/>
    <property type="match status" value="1"/>
</dbReference>
<dbReference type="SUPFAM" id="SSF52540">
    <property type="entry name" value="P-loop containing nucleoside triphosphate hydrolases"/>
    <property type="match status" value="1"/>
</dbReference>
<dbReference type="SUPFAM" id="SSF160443">
    <property type="entry name" value="SMR domain-like"/>
    <property type="match status" value="1"/>
</dbReference>
<dbReference type="PROSITE" id="PS00486">
    <property type="entry name" value="DNA_MISMATCH_REPAIR_2"/>
    <property type="match status" value="1"/>
</dbReference>
<dbReference type="PROSITE" id="PS50828">
    <property type="entry name" value="SMR"/>
    <property type="match status" value="1"/>
</dbReference>
<proteinExistence type="inferred from homology"/>
<comment type="function">
    <text evidence="1">Endonuclease that is involved in the suppression of homologous recombination and thus may have a key role in the control of bacterial genetic diversity.</text>
</comment>
<comment type="function">
    <text evidence="1">Acts as a ribosome collision sensor, splitting the ribosome into its 2 subunits. Detects stalled/collided 70S ribosomes which it binds and splits by an ATP-hydrolysis driven conformational change. Acts upstream of the ribosome quality control system (RQC), a ribosome-associated complex that mediates the extraction of incompletely synthesized nascent chains from stalled ribosomes and their subsequent degradation. Probably generates substrates for RQC.</text>
</comment>
<comment type="subunit">
    <text evidence="1">Homodimer. Binds to stalled ribosomes, contacting rRNA.</text>
</comment>
<comment type="similarity">
    <text evidence="1">Belongs to the DNA mismatch repair MutS family. MutS2 subfamily.</text>
</comment>
<gene>
    <name evidence="1" type="primary">mutS2</name>
    <name evidence="1" type="synonym">rqcU</name>
    <name type="ordered locus">LVIS_1217</name>
</gene>
<accession>Q03R49</accession>